<name>MATK_FAGES</name>
<sequence length="507" mass="60201">MEEFQGYLELDRSWQDDFLYPLILQESIYALVHNQDLGFNRSILLSKKKGYDTKYSLLVVKRLVIRMYQQNFVILSLNHSNKNAFFVPNKNLYSQRISEVFAVIAEIPVSMRVMSSLKGKERKQYKNLQSIHSIFPFLENKFSRLNHVLDILIPHPVHPKILVQTIRYCVKDISCLHLLQLLLYEYCNNGITLKGSVSNFSKKKNQRFLLFLYNSYVCECESIFVFLRNRSSHLRSTSYGAFLARVYFYLKLEHFLKVFTKHCRVILQFFKDPFIHYIRYQGKWILASRGTFLLMTKFKYYFVNFWQCHFYLWLQTRRIYINKSLNQPIDFIGFRLSVRLNPSVVRSQMLENAFLIYNGIKKFETLVPTMSLIGSLAKEKFCNVLGHPISKPAWADLSDSDIIRRFGRMCRNLSHYYSGSSKKGGLYRIKYILRLSCARTLARKHKSTVRAFMKRLGSEFFEEFFFKEEKVISLILSRDSSISRRLYRGPIWYFDIFCIHDLASHND</sequence>
<organism>
    <name type="scientific">Fagopyrum esculentum</name>
    <name type="common">Common buckwheat</name>
    <name type="synonym">Polygonum fagopyrum</name>
    <dbReference type="NCBI Taxonomy" id="3617"/>
    <lineage>
        <taxon>Eukaryota</taxon>
        <taxon>Viridiplantae</taxon>
        <taxon>Streptophyta</taxon>
        <taxon>Embryophyta</taxon>
        <taxon>Tracheophyta</taxon>
        <taxon>Spermatophyta</taxon>
        <taxon>Magnoliopsida</taxon>
        <taxon>eudicotyledons</taxon>
        <taxon>Gunneridae</taxon>
        <taxon>Pentapetalae</taxon>
        <taxon>Caryophyllales</taxon>
        <taxon>Polygonaceae</taxon>
        <taxon>Polygonoideae</taxon>
        <taxon>Fagopyreae</taxon>
        <taxon>Fagopyrum</taxon>
    </lineage>
</organism>
<reference key="1">
    <citation type="journal article" date="2003" name="Am. J. Bot.">
        <title>Intraspecific cpDNA variations of diploid and tetraploid perennial buckwheat, Fagopyrum cymosum (Polygonaceae).</title>
        <authorList>
            <person name="Yamane K."/>
            <person name="Yasui Y."/>
            <person name="Ohnishi O."/>
        </authorList>
        <dbReference type="AGRICOLA" id="IND43672290"/>
    </citation>
    <scope>NUCLEOTIDE SEQUENCE [GENOMIC DNA]</scope>
    <source>
        <strain>C9106</strain>
    </source>
</reference>
<comment type="function">
    <text evidence="1">Usually encoded in the trnK tRNA gene intron. Probably assists in splicing its own and other chloroplast group II introns.</text>
</comment>
<comment type="subcellular location">
    <subcellularLocation>
        <location>Plastid</location>
        <location>Chloroplast</location>
    </subcellularLocation>
</comment>
<comment type="similarity">
    <text evidence="1">Belongs to the intron maturase 2 family. MatK subfamily.</text>
</comment>
<geneLocation type="chloroplast"/>
<evidence type="ECO:0000255" key="1">
    <source>
        <dbReference type="HAMAP-Rule" id="MF_01390"/>
    </source>
</evidence>
<dbReference type="EMBL" id="AB093087">
    <property type="protein sequence ID" value="BAC21007.1"/>
    <property type="molecule type" value="Genomic_DNA"/>
</dbReference>
<dbReference type="GO" id="GO:0009507">
    <property type="term" value="C:chloroplast"/>
    <property type="evidence" value="ECO:0007669"/>
    <property type="project" value="UniProtKB-SubCell"/>
</dbReference>
<dbReference type="GO" id="GO:0003723">
    <property type="term" value="F:RNA binding"/>
    <property type="evidence" value="ECO:0007669"/>
    <property type="project" value="UniProtKB-KW"/>
</dbReference>
<dbReference type="GO" id="GO:0006397">
    <property type="term" value="P:mRNA processing"/>
    <property type="evidence" value="ECO:0007669"/>
    <property type="project" value="UniProtKB-KW"/>
</dbReference>
<dbReference type="GO" id="GO:0008380">
    <property type="term" value="P:RNA splicing"/>
    <property type="evidence" value="ECO:0007669"/>
    <property type="project" value="UniProtKB-UniRule"/>
</dbReference>
<dbReference type="GO" id="GO:0008033">
    <property type="term" value="P:tRNA processing"/>
    <property type="evidence" value="ECO:0007669"/>
    <property type="project" value="UniProtKB-KW"/>
</dbReference>
<dbReference type="HAMAP" id="MF_01390">
    <property type="entry name" value="MatK"/>
    <property type="match status" value="1"/>
</dbReference>
<dbReference type="InterPro" id="IPR024937">
    <property type="entry name" value="Domain_X"/>
</dbReference>
<dbReference type="InterPro" id="IPR002866">
    <property type="entry name" value="Maturase_MatK"/>
</dbReference>
<dbReference type="InterPro" id="IPR024942">
    <property type="entry name" value="Maturase_MatK_N"/>
</dbReference>
<dbReference type="PANTHER" id="PTHR34811">
    <property type="entry name" value="MATURASE K"/>
    <property type="match status" value="1"/>
</dbReference>
<dbReference type="PANTHER" id="PTHR34811:SF1">
    <property type="entry name" value="MATURASE K"/>
    <property type="match status" value="1"/>
</dbReference>
<dbReference type="Pfam" id="PF01348">
    <property type="entry name" value="Intron_maturas2"/>
    <property type="match status" value="1"/>
</dbReference>
<dbReference type="Pfam" id="PF01824">
    <property type="entry name" value="MatK_N"/>
    <property type="match status" value="1"/>
</dbReference>
<proteinExistence type="inferred from homology"/>
<accession>Q85ZM2</accession>
<keyword id="KW-0150">Chloroplast</keyword>
<keyword id="KW-0507">mRNA processing</keyword>
<keyword id="KW-0934">Plastid</keyword>
<keyword id="KW-0694">RNA-binding</keyword>
<keyword id="KW-0819">tRNA processing</keyword>
<gene>
    <name evidence="1" type="primary">matK</name>
</gene>
<protein>
    <recommendedName>
        <fullName evidence="1">Maturase K</fullName>
    </recommendedName>
    <alternativeName>
        <fullName evidence="1">Intron maturase</fullName>
    </alternativeName>
</protein>
<feature type="chain" id="PRO_0000143383" description="Maturase K">
    <location>
        <begin position="1"/>
        <end position="507"/>
    </location>
</feature>